<name>PTH_STRPG</name>
<reference key="1">
    <citation type="journal article" date="2007" name="J. Bacteriol.">
        <title>Complete genome of acute rheumatic fever-associated serotype M5 Streptococcus pyogenes strain Manfredo.</title>
        <authorList>
            <person name="Holden M.T.G."/>
            <person name="Scott A."/>
            <person name="Cherevach I."/>
            <person name="Chillingworth T."/>
            <person name="Churcher C."/>
            <person name="Cronin A."/>
            <person name="Dowd L."/>
            <person name="Feltwell T."/>
            <person name="Hamlin N."/>
            <person name="Holroyd S."/>
            <person name="Jagels K."/>
            <person name="Moule S."/>
            <person name="Mungall K."/>
            <person name="Quail M.A."/>
            <person name="Price C."/>
            <person name="Rabbinowitsch E."/>
            <person name="Sharp S."/>
            <person name="Skelton J."/>
            <person name="Whitehead S."/>
            <person name="Barrell B.G."/>
            <person name="Kehoe M."/>
            <person name="Parkhill J."/>
        </authorList>
    </citation>
    <scope>NUCLEOTIDE SEQUENCE [LARGE SCALE GENOMIC DNA]</scope>
    <source>
        <strain>Manfredo</strain>
    </source>
</reference>
<accession>A2RBX7</accession>
<keyword id="KW-0963">Cytoplasm</keyword>
<keyword id="KW-0378">Hydrolase</keyword>
<keyword id="KW-0694">RNA-binding</keyword>
<keyword id="KW-0820">tRNA-binding</keyword>
<comment type="function">
    <text evidence="1">Hydrolyzes ribosome-free peptidyl-tRNAs (with 1 or more amino acids incorporated), which drop off the ribosome during protein synthesis, or as a result of ribosome stalling.</text>
</comment>
<comment type="function">
    <text evidence="1">Catalyzes the release of premature peptidyl moieties from peptidyl-tRNA molecules trapped in stalled 50S ribosomal subunits, and thus maintains levels of free tRNAs and 50S ribosomes.</text>
</comment>
<comment type="catalytic activity">
    <reaction evidence="1">
        <text>an N-acyl-L-alpha-aminoacyl-tRNA + H2O = an N-acyl-L-amino acid + a tRNA + H(+)</text>
        <dbReference type="Rhea" id="RHEA:54448"/>
        <dbReference type="Rhea" id="RHEA-COMP:10123"/>
        <dbReference type="Rhea" id="RHEA-COMP:13883"/>
        <dbReference type="ChEBI" id="CHEBI:15377"/>
        <dbReference type="ChEBI" id="CHEBI:15378"/>
        <dbReference type="ChEBI" id="CHEBI:59874"/>
        <dbReference type="ChEBI" id="CHEBI:78442"/>
        <dbReference type="ChEBI" id="CHEBI:138191"/>
        <dbReference type="EC" id="3.1.1.29"/>
    </reaction>
</comment>
<comment type="subunit">
    <text evidence="1">Monomer.</text>
</comment>
<comment type="subcellular location">
    <subcellularLocation>
        <location evidence="1">Cytoplasm</location>
    </subcellularLocation>
</comment>
<comment type="similarity">
    <text evidence="1">Belongs to the PTH family.</text>
</comment>
<protein>
    <recommendedName>
        <fullName evidence="1">Peptidyl-tRNA hydrolase</fullName>
        <shortName evidence="1">Pth</shortName>
        <ecNumber evidence="1">3.1.1.29</ecNumber>
    </recommendedName>
</protein>
<organism>
    <name type="scientific">Streptococcus pyogenes serotype M5 (strain Manfredo)</name>
    <dbReference type="NCBI Taxonomy" id="160491"/>
    <lineage>
        <taxon>Bacteria</taxon>
        <taxon>Bacillati</taxon>
        <taxon>Bacillota</taxon>
        <taxon>Bacilli</taxon>
        <taxon>Lactobacillales</taxon>
        <taxon>Streptococcaceae</taxon>
        <taxon>Streptococcus</taxon>
    </lineage>
</organism>
<proteinExistence type="inferred from homology"/>
<feature type="chain" id="PRO_1000010656" description="Peptidyl-tRNA hydrolase">
    <location>
        <begin position="1"/>
        <end position="189"/>
    </location>
</feature>
<feature type="active site" description="Proton acceptor" evidence="1">
    <location>
        <position position="20"/>
    </location>
</feature>
<feature type="binding site" evidence="1">
    <location>
        <position position="15"/>
    </location>
    <ligand>
        <name>tRNA</name>
        <dbReference type="ChEBI" id="CHEBI:17843"/>
    </ligand>
</feature>
<feature type="binding site" evidence="1">
    <location>
        <position position="66"/>
    </location>
    <ligand>
        <name>tRNA</name>
        <dbReference type="ChEBI" id="CHEBI:17843"/>
    </ligand>
</feature>
<feature type="binding site" evidence="1">
    <location>
        <position position="68"/>
    </location>
    <ligand>
        <name>tRNA</name>
        <dbReference type="ChEBI" id="CHEBI:17843"/>
    </ligand>
</feature>
<feature type="binding site" evidence="1">
    <location>
        <position position="114"/>
    </location>
    <ligand>
        <name>tRNA</name>
        <dbReference type="ChEBI" id="CHEBI:17843"/>
    </ligand>
</feature>
<feature type="site" description="Discriminates between blocked and unblocked aminoacyl-tRNA" evidence="1">
    <location>
        <position position="10"/>
    </location>
</feature>
<feature type="site" description="Stabilizes the basic form of H active site to accept a proton" evidence="1">
    <location>
        <position position="93"/>
    </location>
</feature>
<evidence type="ECO:0000255" key="1">
    <source>
        <dbReference type="HAMAP-Rule" id="MF_00083"/>
    </source>
</evidence>
<gene>
    <name evidence="1" type="primary">pth</name>
    <name type="ordered locus">SpyM50005</name>
</gene>
<sequence length="189" mass="21169">MVKMIVGLGNPGSKYEKTKHNIGFMAIDNIVKNLDVTFTDDKNFKAQIGSTFINHEKVYFVKPTTFMNNSGIAVKALLTYYNIDITDLIVIYDDLDMEVSKLRLRSKGSAGGHNGIKSIIAHIGTQEFNRIKVGIGRPLKGMTVISHVMGQFNTEDNIAISLTLDRVVNAVKFYLQENDFEKTMQKFNG</sequence>
<dbReference type="EC" id="3.1.1.29" evidence="1"/>
<dbReference type="EMBL" id="AM295007">
    <property type="protein sequence ID" value="CAM29349.1"/>
    <property type="molecule type" value="Genomic_DNA"/>
</dbReference>
<dbReference type="RefSeq" id="WP_011017221.1">
    <property type="nucleotide sequence ID" value="NC_009332.1"/>
</dbReference>
<dbReference type="SMR" id="A2RBX7"/>
<dbReference type="KEGG" id="spf:SpyM50005"/>
<dbReference type="HOGENOM" id="CLU_062456_4_1_9"/>
<dbReference type="GO" id="GO:0005737">
    <property type="term" value="C:cytoplasm"/>
    <property type="evidence" value="ECO:0007669"/>
    <property type="project" value="UniProtKB-SubCell"/>
</dbReference>
<dbReference type="GO" id="GO:0004045">
    <property type="term" value="F:peptidyl-tRNA hydrolase activity"/>
    <property type="evidence" value="ECO:0007669"/>
    <property type="project" value="UniProtKB-UniRule"/>
</dbReference>
<dbReference type="GO" id="GO:0000049">
    <property type="term" value="F:tRNA binding"/>
    <property type="evidence" value="ECO:0007669"/>
    <property type="project" value="UniProtKB-UniRule"/>
</dbReference>
<dbReference type="GO" id="GO:0006515">
    <property type="term" value="P:protein quality control for misfolded or incompletely synthesized proteins"/>
    <property type="evidence" value="ECO:0007669"/>
    <property type="project" value="UniProtKB-UniRule"/>
</dbReference>
<dbReference type="GO" id="GO:0072344">
    <property type="term" value="P:rescue of stalled ribosome"/>
    <property type="evidence" value="ECO:0007669"/>
    <property type="project" value="UniProtKB-UniRule"/>
</dbReference>
<dbReference type="CDD" id="cd00462">
    <property type="entry name" value="PTH"/>
    <property type="match status" value="1"/>
</dbReference>
<dbReference type="FunFam" id="3.40.50.1470:FF:000001">
    <property type="entry name" value="Peptidyl-tRNA hydrolase"/>
    <property type="match status" value="1"/>
</dbReference>
<dbReference type="Gene3D" id="3.40.50.1470">
    <property type="entry name" value="Peptidyl-tRNA hydrolase"/>
    <property type="match status" value="1"/>
</dbReference>
<dbReference type="HAMAP" id="MF_00083">
    <property type="entry name" value="Pept_tRNA_hydro_bact"/>
    <property type="match status" value="1"/>
</dbReference>
<dbReference type="InterPro" id="IPR001328">
    <property type="entry name" value="Pept_tRNA_hydro"/>
</dbReference>
<dbReference type="InterPro" id="IPR018171">
    <property type="entry name" value="Pept_tRNA_hydro_CS"/>
</dbReference>
<dbReference type="InterPro" id="IPR036416">
    <property type="entry name" value="Pept_tRNA_hydro_sf"/>
</dbReference>
<dbReference type="NCBIfam" id="TIGR00447">
    <property type="entry name" value="pth"/>
    <property type="match status" value="1"/>
</dbReference>
<dbReference type="PANTHER" id="PTHR17224">
    <property type="entry name" value="PEPTIDYL-TRNA HYDROLASE"/>
    <property type="match status" value="1"/>
</dbReference>
<dbReference type="PANTHER" id="PTHR17224:SF1">
    <property type="entry name" value="PEPTIDYL-TRNA HYDROLASE"/>
    <property type="match status" value="1"/>
</dbReference>
<dbReference type="Pfam" id="PF01195">
    <property type="entry name" value="Pept_tRNA_hydro"/>
    <property type="match status" value="1"/>
</dbReference>
<dbReference type="SUPFAM" id="SSF53178">
    <property type="entry name" value="Peptidyl-tRNA hydrolase-like"/>
    <property type="match status" value="1"/>
</dbReference>
<dbReference type="PROSITE" id="PS01195">
    <property type="entry name" value="PEPT_TRNA_HYDROL_1"/>
    <property type="match status" value="1"/>
</dbReference>
<dbReference type="PROSITE" id="PS01196">
    <property type="entry name" value="PEPT_TRNA_HYDROL_2"/>
    <property type="match status" value="1"/>
</dbReference>